<sequence>MRASLIDGKAIAKKLRDSVKEEVNLRISNGQRVPGLAVILVGCDPASQVYVGSKRKACEEVGFISRSYDLPHTTSEQELLALVSELNNDDSIDGILVQLPLPKNLNADLIIEHINPLKDVDGFHPSNVGKLVLRQPGLRPCTPKGIVTLIESTGIDPKGLDALVIGASNIVGRPMGLELLLAKCTVTTTHRFTKDLEGKVRNADLLVVAVGKPGFIPGEWIKEGAIVIDVGINRLDNGKLVGDVDFGAAKERASFITPVPGGVGPMTVASLIENTLIACQQSSQ</sequence>
<organism>
    <name type="scientific">Colwellia psychrerythraea (strain 34H / ATCC BAA-681)</name>
    <name type="common">Vibrio psychroerythus</name>
    <dbReference type="NCBI Taxonomy" id="167879"/>
    <lineage>
        <taxon>Bacteria</taxon>
        <taxon>Pseudomonadati</taxon>
        <taxon>Pseudomonadota</taxon>
        <taxon>Gammaproteobacteria</taxon>
        <taxon>Alteromonadales</taxon>
        <taxon>Colwelliaceae</taxon>
        <taxon>Colwellia</taxon>
    </lineage>
</organism>
<gene>
    <name evidence="1" type="primary">folD2</name>
    <name type="ordered locus">CPS_3791</name>
</gene>
<accession>Q47XL6</accession>
<reference key="1">
    <citation type="journal article" date="2005" name="Proc. Natl. Acad. Sci. U.S.A.">
        <title>The psychrophilic lifestyle as revealed by the genome sequence of Colwellia psychrerythraea 34H through genomic and proteomic analyses.</title>
        <authorList>
            <person name="Methe B.A."/>
            <person name="Nelson K.E."/>
            <person name="Deming J.W."/>
            <person name="Momen B."/>
            <person name="Melamud E."/>
            <person name="Zhang X."/>
            <person name="Moult J."/>
            <person name="Madupu R."/>
            <person name="Nelson W.C."/>
            <person name="Dodson R.J."/>
            <person name="Brinkac L.M."/>
            <person name="Daugherty S.C."/>
            <person name="Durkin A.S."/>
            <person name="DeBoy R.T."/>
            <person name="Kolonay J.F."/>
            <person name="Sullivan S.A."/>
            <person name="Zhou L."/>
            <person name="Davidsen T.M."/>
            <person name="Wu M."/>
            <person name="Huston A.L."/>
            <person name="Lewis M."/>
            <person name="Weaver B."/>
            <person name="Weidman J.F."/>
            <person name="Khouri H."/>
            <person name="Utterback T.R."/>
            <person name="Feldblyum T.V."/>
            <person name="Fraser C.M."/>
        </authorList>
    </citation>
    <scope>NUCLEOTIDE SEQUENCE [LARGE SCALE GENOMIC DNA]</scope>
    <source>
        <strain>34H / ATCC BAA-681</strain>
    </source>
</reference>
<keyword id="KW-0028">Amino-acid biosynthesis</keyword>
<keyword id="KW-0368">Histidine biosynthesis</keyword>
<keyword id="KW-0378">Hydrolase</keyword>
<keyword id="KW-0486">Methionine biosynthesis</keyword>
<keyword id="KW-0511">Multifunctional enzyme</keyword>
<keyword id="KW-0521">NADP</keyword>
<keyword id="KW-0554">One-carbon metabolism</keyword>
<keyword id="KW-0560">Oxidoreductase</keyword>
<keyword id="KW-0658">Purine biosynthesis</keyword>
<proteinExistence type="inferred from homology"/>
<comment type="function">
    <text evidence="1">Catalyzes the oxidation of 5,10-methylenetetrahydrofolate to 5,10-methenyltetrahydrofolate and then the hydrolysis of 5,10-methenyltetrahydrofolate to 10-formyltetrahydrofolate.</text>
</comment>
<comment type="catalytic activity">
    <reaction evidence="1">
        <text>(6R)-5,10-methylene-5,6,7,8-tetrahydrofolate + NADP(+) = (6R)-5,10-methenyltetrahydrofolate + NADPH</text>
        <dbReference type="Rhea" id="RHEA:22812"/>
        <dbReference type="ChEBI" id="CHEBI:15636"/>
        <dbReference type="ChEBI" id="CHEBI:57455"/>
        <dbReference type="ChEBI" id="CHEBI:57783"/>
        <dbReference type="ChEBI" id="CHEBI:58349"/>
        <dbReference type="EC" id="1.5.1.5"/>
    </reaction>
</comment>
<comment type="catalytic activity">
    <reaction evidence="1">
        <text>(6R)-5,10-methenyltetrahydrofolate + H2O = (6R)-10-formyltetrahydrofolate + H(+)</text>
        <dbReference type="Rhea" id="RHEA:23700"/>
        <dbReference type="ChEBI" id="CHEBI:15377"/>
        <dbReference type="ChEBI" id="CHEBI:15378"/>
        <dbReference type="ChEBI" id="CHEBI:57455"/>
        <dbReference type="ChEBI" id="CHEBI:195366"/>
        <dbReference type="EC" id="3.5.4.9"/>
    </reaction>
</comment>
<comment type="pathway">
    <text evidence="1">One-carbon metabolism; tetrahydrofolate interconversion.</text>
</comment>
<comment type="subunit">
    <text evidence="1">Homodimer.</text>
</comment>
<comment type="similarity">
    <text evidence="1">Belongs to the tetrahydrofolate dehydrogenase/cyclohydrolase family.</text>
</comment>
<name>FOLD2_COLP3</name>
<dbReference type="EC" id="1.5.1.5" evidence="1"/>
<dbReference type="EC" id="3.5.4.9" evidence="1"/>
<dbReference type="EMBL" id="CP000083">
    <property type="protein sequence ID" value="AAZ24699.1"/>
    <property type="molecule type" value="Genomic_DNA"/>
</dbReference>
<dbReference type="RefSeq" id="WP_011044540.1">
    <property type="nucleotide sequence ID" value="NC_003910.7"/>
</dbReference>
<dbReference type="SMR" id="Q47XL6"/>
<dbReference type="STRING" id="167879.CPS_3791"/>
<dbReference type="KEGG" id="cps:CPS_3791"/>
<dbReference type="eggNOG" id="COG0190">
    <property type="taxonomic scope" value="Bacteria"/>
</dbReference>
<dbReference type="HOGENOM" id="CLU_034045_2_1_6"/>
<dbReference type="UniPathway" id="UPA00193"/>
<dbReference type="Proteomes" id="UP000000547">
    <property type="component" value="Chromosome"/>
</dbReference>
<dbReference type="GO" id="GO:0005829">
    <property type="term" value="C:cytosol"/>
    <property type="evidence" value="ECO:0007669"/>
    <property type="project" value="TreeGrafter"/>
</dbReference>
<dbReference type="GO" id="GO:0004477">
    <property type="term" value="F:methenyltetrahydrofolate cyclohydrolase activity"/>
    <property type="evidence" value="ECO:0007669"/>
    <property type="project" value="UniProtKB-UniRule"/>
</dbReference>
<dbReference type="GO" id="GO:0004488">
    <property type="term" value="F:methylenetetrahydrofolate dehydrogenase (NADP+) activity"/>
    <property type="evidence" value="ECO:0007669"/>
    <property type="project" value="UniProtKB-UniRule"/>
</dbReference>
<dbReference type="GO" id="GO:0000105">
    <property type="term" value="P:L-histidine biosynthetic process"/>
    <property type="evidence" value="ECO:0007669"/>
    <property type="project" value="UniProtKB-KW"/>
</dbReference>
<dbReference type="GO" id="GO:0009086">
    <property type="term" value="P:methionine biosynthetic process"/>
    <property type="evidence" value="ECO:0007669"/>
    <property type="project" value="UniProtKB-KW"/>
</dbReference>
<dbReference type="GO" id="GO:0006164">
    <property type="term" value="P:purine nucleotide biosynthetic process"/>
    <property type="evidence" value="ECO:0007669"/>
    <property type="project" value="UniProtKB-KW"/>
</dbReference>
<dbReference type="GO" id="GO:0035999">
    <property type="term" value="P:tetrahydrofolate interconversion"/>
    <property type="evidence" value="ECO:0007669"/>
    <property type="project" value="UniProtKB-UniRule"/>
</dbReference>
<dbReference type="CDD" id="cd01080">
    <property type="entry name" value="NAD_bind_m-THF_DH_Cyclohyd"/>
    <property type="match status" value="1"/>
</dbReference>
<dbReference type="FunFam" id="3.40.50.720:FF:000006">
    <property type="entry name" value="Bifunctional protein FolD"/>
    <property type="match status" value="1"/>
</dbReference>
<dbReference type="FunFam" id="3.40.50.10860:FF:000005">
    <property type="entry name" value="C-1-tetrahydrofolate synthase, cytoplasmic, putative"/>
    <property type="match status" value="1"/>
</dbReference>
<dbReference type="Gene3D" id="3.40.50.10860">
    <property type="entry name" value="Leucine Dehydrogenase, chain A, domain 1"/>
    <property type="match status" value="1"/>
</dbReference>
<dbReference type="Gene3D" id="3.40.50.720">
    <property type="entry name" value="NAD(P)-binding Rossmann-like Domain"/>
    <property type="match status" value="1"/>
</dbReference>
<dbReference type="HAMAP" id="MF_01576">
    <property type="entry name" value="THF_DHG_CYH"/>
    <property type="match status" value="1"/>
</dbReference>
<dbReference type="InterPro" id="IPR046346">
    <property type="entry name" value="Aminoacid_DH-like_N_sf"/>
</dbReference>
<dbReference type="InterPro" id="IPR036291">
    <property type="entry name" value="NAD(P)-bd_dom_sf"/>
</dbReference>
<dbReference type="InterPro" id="IPR000672">
    <property type="entry name" value="THF_DH/CycHdrlase"/>
</dbReference>
<dbReference type="InterPro" id="IPR020630">
    <property type="entry name" value="THF_DH/CycHdrlase_cat_dom"/>
</dbReference>
<dbReference type="InterPro" id="IPR020867">
    <property type="entry name" value="THF_DH/CycHdrlase_CS"/>
</dbReference>
<dbReference type="InterPro" id="IPR020631">
    <property type="entry name" value="THF_DH/CycHdrlase_NAD-bd_dom"/>
</dbReference>
<dbReference type="NCBIfam" id="NF008058">
    <property type="entry name" value="PRK10792.1"/>
    <property type="match status" value="1"/>
</dbReference>
<dbReference type="NCBIfam" id="NF010783">
    <property type="entry name" value="PRK14186.1"/>
    <property type="match status" value="1"/>
</dbReference>
<dbReference type="PANTHER" id="PTHR48099:SF5">
    <property type="entry name" value="C-1-TETRAHYDROFOLATE SYNTHASE, CYTOPLASMIC"/>
    <property type="match status" value="1"/>
</dbReference>
<dbReference type="PANTHER" id="PTHR48099">
    <property type="entry name" value="C-1-TETRAHYDROFOLATE SYNTHASE, CYTOPLASMIC-RELATED"/>
    <property type="match status" value="1"/>
</dbReference>
<dbReference type="Pfam" id="PF00763">
    <property type="entry name" value="THF_DHG_CYH"/>
    <property type="match status" value="1"/>
</dbReference>
<dbReference type="Pfam" id="PF02882">
    <property type="entry name" value="THF_DHG_CYH_C"/>
    <property type="match status" value="1"/>
</dbReference>
<dbReference type="PRINTS" id="PR00085">
    <property type="entry name" value="THFDHDRGNASE"/>
</dbReference>
<dbReference type="SUPFAM" id="SSF53223">
    <property type="entry name" value="Aminoacid dehydrogenase-like, N-terminal domain"/>
    <property type="match status" value="1"/>
</dbReference>
<dbReference type="SUPFAM" id="SSF51735">
    <property type="entry name" value="NAD(P)-binding Rossmann-fold domains"/>
    <property type="match status" value="1"/>
</dbReference>
<dbReference type="PROSITE" id="PS00766">
    <property type="entry name" value="THF_DHG_CYH_1"/>
    <property type="match status" value="1"/>
</dbReference>
<dbReference type="PROSITE" id="PS00767">
    <property type="entry name" value="THF_DHG_CYH_2"/>
    <property type="match status" value="1"/>
</dbReference>
<feature type="chain" id="PRO_0000268322" description="Bifunctional protein FolD 2">
    <location>
        <begin position="1"/>
        <end position="284"/>
    </location>
</feature>
<feature type="binding site" evidence="1">
    <location>
        <begin position="166"/>
        <end position="168"/>
    </location>
    <ligand>
        <name>NADP(+)</name>
        <dbReference type="ChEBI" id="CHEBI:58349"/>
    </ligand>
</feature>
<feature type="binding site" evidence="1">
    <location>
        <position position="232"/>
    </location>
    <ligand>
        <name>NADP(+)</name>
        <dbReference type="ChEBI" id="CHEBI:58349"/>
    </ligand>
</feature>
<evidence type="ECO:0000255" key="1">
    <source>
        <dbReference type="HAMAP-Rule" id="MF_01576"/>
    </source>
</evidence>
<protein>
    <recommendedName>
        <fullName evidence="1">Bifunctional protein FolD 2</fullName>
    </recommendedName>
    <domain>
        <recommendedName>
            <fullName evidence="1">Methylenetetrahydrofolate dehydrogenase</fullName>
            <ecNumber evidence="1">1.5.1.5</ecNumber>
        </recommendedName>
    </domain>
    <domain>
        <recommendedName>
            <fullName evidence="1">Methenyltetrahydrofolate cyclohydrolase</fullName>
            <ecNumber evidence="1">3.5.4.9</ecNumber>
        </recommendedName>
    </domain>
</protein>